<dbReference type="EC" id="2.4.2.18" evidence="1"/>
<dbReference type="EMBL" id="CP000419">
    <property type="protein sequence ID" value="ABJ66704.1"/>
    <property type="molecule type" value="Genomic_DNA"/>
</dbReference>
<dbReference type="RefSeq" id="WP_011681519.1">
    <property type="nucleotide sequence ID" value="NZ_CP086001.1"/>
</dbReference>
<dbReference type="SMR" id="Q03JB8"/>
<dbReference type="KEGG" id="ste:STER_1552"/>
<dbReference type="HOGENOM" id="CLU_034315_2_1_9"/>
<dbReference type="UniPathway" id="UPA00035">
    <property type="reaction ID" value="UER00041"/>
</dbReference>
<dbReference type="GO" id="GO:0005829">
    <property type="term" value="C:cytosol"/>
    <property type="evidence" value="ECO:0007669"/>
    <property type="project" value="TreeGrafter"/>
</dbReference>
<dbReference type="GO" id="GO:0004048">
    <property type="term" value="F:anthranilate phosphoribosyltransferase activity"/>
    <property type="evidence" value="ECO:0007669"/>
    <property type="project" value="UniProtKB-UniRule"/>
</dbReference>
<dbReference type="GO" id="GO:0000287">
    <property type="term" value="F:magnesium ion binding"/>
    <property type="evidence" value="ECO:0007669"/>
    <property type="project" value="UniProtKB-UniRule"/>
</dbReference>
<dbReference type="GO" id="GO:0000162">
    <property type="term" value="P:L-tryptophan biosynthetic process"/>
    <property type="evidence" value="ECO:0007669"/>
    <property type="project" value="UniProtKB-UniRule"/>
</dbReference>
<dbReference type="FunFam" id="3.40.1030.10:FF:000002">
    <property type="entry name" value="Anthranilate phosphoribosyltransferase"/>
    <property type="match status" value="1"/>
</dbReference>
<dbReference type="Gene3D" id="3.40.1030.10">
    <property type="entry name" value="Nucleoside phosphorylase/phosphoribosyltransferase catalytic domain"/>
    <property type="match status" value="1"/>
</dbReference>
<dbReference type="Gene3D" id="1.20.970.10">
    <property type="entry name" value="Transferase, Pyrimidine Nucleoside Phosphorylase, Chain C"/>
    <property type="match status" value="1"/>
</dbReference>
<dbReference type="HAMAP" id="MF_00211">
    <property type="entry name" value="TrpD"/>
    <property type="match status" value="1"/>
</dbReference>
<dbReference type="InterPro" id="IPR005940">
    <property type="entry name" value="Anthranilate_Pribosyl_Tfrase"/>
</dbReference>
<dbReference type="InterPro" id="IPR000312">
    <property type="entry name" value="Glycosyl_Trfase_fam3"/>
</dbReference>
<dbReference type="InterPro" id="IPR017459">
    <property type="entry name" value="Glycosyl_Trfase_fam3_N_dom"/>
</dbReference>
<dbReference type="InterPro" id="IPR036320">
    <property type="entry name" value="Glycosyl_Trfase_fam3_N_dom_sf"/>
</dbReference>
<dbReference type="InterPro" id="IPR035902">
    <property type="entry name" value="Nuc_phospho_transferase"/>
</dbReference>
<dbReference type="NCBIfam" id="TIGR01245">
    <property type="entry name" value="trpD"/>
    <property type="match status" value="1"/>
</dbReference>
<dbReference type="PANTHER" id="PTHR43285">
    <property type="entry name" value="ANTHRANILATE PHOSPHORIBOSYLTRANSFERASE"/>
    <property type="match status" value="1"/>
</dbReference>
<dbReference type="PANTHER" id="PTHR43285:SF2">
    <property type="entry name" value="ANTHRANILATE PHOSPHORIBOSYLTRANSFERASE"/>
    <property type="match status" value="1"/>
</dbReference>
<dbReference type="Pfam" id="PF02885">
    <property type="entry name" value="Glycos_trans_3N"/>
    <property type="match status" value="1"/>
</dbReference>
<dbReference type="Pfam" id="PF00591">
    <property type="entry name" value="Glycos_transf_3"/>
    <property type="match status" value="1"/>
</dbReference>
<dbReference type="SUPFAM" id="SSF52418">
    <property type="entry name" value="Nucleoside phosphorylase/phosphoribosyltransferase catalytic domain"/>
    <property type="match status" value="1"/>
</dbReference>
<dbReference type="SUPFAM" id="SSF47648">
    <property type="entry name" value="Nucleoside phosphorylase/phosphoribosyltransferase N-terminal domain"/>
    <property type="match status" value="1"/>
</dbReference>
<protein>
    <recommendedName>
        <fullName evidence="1">Anthranilate phosphoribosyltransferase</fullName>
        <ecNumber evidence="1">2.4.2.18</ecNumber>
    </recommendedName>
</protein>
<evidence type="ECO:0000255" key="1">
    <source>
        <dbReference type="HAMAP-Rule" id="MF_00211"/>
    </source>
</evidence>
<organism>
    <name type="scientific">Streptococcus thermophilus (strain ATCC BAA-491 / LMD-9)</name>
    <dbReference type="NCBI Taxonomy" id="322159"/>
    <lineage>
        <taxon>Bacteria</taxon>
        <taxon>Bacillati</taxon>
        <taxon>Bacillota</taxon>
        <taxon>Bacilli</taxon>
        <taxon>Lactobacillales</taxon>
        <taxon>Streptococcaceae</taxon>
        <taxon>Streptococcus</taxon>
    </lineage>
</organism>
<gene>
    <name evidence="1" type="primary">trpD</name>
    <name type="ordered locus">STER_1552</name>
</gene>
<proteinExistence type="inferred from homology"/>
<keyword id="KW-0028">Amino-acid biosynthesis</keyword>
<keyword id="KW-0057">Aromatic amino acid biosynthesis</keyword>
<keyword id="KW-0328">Glycosyltransferase</keyword>
<keyword id="KW-0460">Magnesium</keyword>
<keyword id="KW-0479">Metal-binding</keyword>
<keyword id="KW-0808">Transferase</keyword>
<keyword id="KW-0822">Tryptophan biosynthesis</keyword>
<sequence>MKEIFLQISNRQDLSQDQVQAVFDRILKNEVSESQIASFLMGLKIKGETSDEITGIVRALKSHATVLPETFTDAMCNCGTGGDQSYSFNISTTACFVLAAGGIRMAKAGNRSISSKSGSADVLEVLGINVAASPEILSKALDEVGLAFIFAQTMHPAMRFIGPARQALGIPTIMNLVGPLANPLDLETQLMGLYRVELQEIVANAIQQLGRKRAVIITGPDNMDEAALYGTNTYTLLEDGHISQHTFTYEDLGMEKVELSDITGGDAKENAEILLSVLRNEASPYLETTVLNVGLGFFANGKAGTIKEGVELARQLIADGSALEKLRKLQEVQV</sequence>
<reference key="1">
    <citation type="journal article" date="2006" name="Proc. Natl. Acad. Sci. U.S.A.">
        <title>Comparative genomics of the lactic acid bacteria.</title>
        <authorList>
            <person name="Makarova K.S."/>
            <person name="Slesarev A."/>
            <person name="Wolf Y.I."/>
            <person name="Sorokin A."/>
            <person name="Mirkin B."/>
            <person name="Koonin E.V."/>
            <person name="Pavlov A."/>
            <person name="Pavlova N."/>
            <person name="Karamychev V."/>
            <person name="Polouchine N."/>
            <person name="Shakhova V."/>
            <person name="Grigoriev I."/>
            <person name="Lou Y."/>
            <person name="Rohksar D."/>
            <person name="Lucas S."/>
            <person name="Huang K."/>
            <person name="Goodstein D.M."/>
            <person name="Hawkins T."/>
            <person name="Plengvidhya V."/>
            <person name="Welker D."/>
            <person name="Hughes J."/>
            <person name="Goh Y."/>
            <person name="Benson A."/>
            <person name="Baldwin K."/>
            <person name="Lee J.-H."/>
            <person name="Diaz-Muniz I."/>
            <person name="Dosti B."/>
            <person name="Smeianov V."/>
            <person name="Wechter W."/>
            <person name="Barabote R."/>
            <person name="Lorca G."/>
            <person name="Altermann E."/>
            <person name="Barrangou R."/>
            <person name="Ganesan B."/>
            <person name="Xie Y."/>
            <person name="Rawsthorne H."/>
            <person name="Tamir D."/>
            <person name="Parker C."/>
            <person name="Breidt F."/>
            <person name="Broadbent J.R."/>
            <person name="Hutkins R."/>
            <person name="O'Sullivan D."/>
            <person name="Steele J."/>
            <person name="Unlu G."/>
            <person name="Saier M.H. Jr."/>
            <person name="Klaenhammer T."/>
            <person name="Richardson P."/>
            <person name="Kozyavkin S."/>
            <person name="Weimer B.C."/>
            <person name="Mills D.A."/>
        </authorList>
    </citation>
    <scope>NUCLEOTIDE SEQUENCE [LARGE SCALE GENOMIC DNA]</scope>
    <source>
        <strain>ATCC BAA-491 / LMD-9</strain>
    </source>
</reference>
<comment type="function">
    <text evidence="1">Catalyzes the transfer of the phosphoribosyl group of 5-phosphorylribose-1-pyrophosphate (PRPP) to anthranilate to yield N-(5'-phosphoribosyl)-anthranilate (PRA).</text>
</comment>
<comment type="catalytic activity">
    <reaction evidence="1">
        <text>N-(5-phospho-beta-D-ribosyl)anthranilate + diphosphate = 5-phospho-alpha-D-ribose 1-diphosphate + anthranilate</text>
        <dbReference type="Rhea" id="RHEA:11768"/>
        <dbReference type="ChEBI" id="CHEBI:16567"/>
        <dbReference type="ChEBI" id="CHEBI:18277"/>
        <dbReference type="ChEBI" id="CHEBI:33019"/>
        <dbReference type="ChEBI" id="CHEBI:58017"/>
        <dbReference type="EC" id="2.4.2.18"/>
    </reaction>
</comment>
<comment type="cofactor">
    <cofactor evidence="1">
        <name>Mg(2+)</name>
        <dbReference type="ChEBI" id="CHEBI:18420"/>
    </cofactor>
    <text evidence="1">Binds 2 magnesium ions per monomer.</text>
</comment>
<comment type="pathway">
    <text evidence="1">Amino-acid biosynthesis; L-tryptophan biosynthesis; L-tryptophan from chorismate: step 2/5.</text>
</comment>
<comment type="subunit">
    <text evidence="1">Homodimer.</text>
</comment>
<comment type="similarity">
    <text evidence="1">Belongs to the anthranilate phosphoribosyltransferase family.</text>
</comment>
<name>TRPD_STRTD</name>
<accession>Q03JB8</accession>
<feature type="chain" id="PRO_1000043075" description="Anthranilate phosphoribosyltransferase">
    <location>
        <begin position="1"/>
        <end position="334"/>
    </location>
</feature>
<feature type="binding site" evidence="1">
    <location>
        <position position="79"/>
    </location>
    <ligand>
        <name>5-phospho-alpha-D-ribose 1-diphosphate</name>
        <dbReference type="ChEBI" id="CHEBI:58017"/>
    </ligand>
</feature>
<feature type="binding site" evidence="1">
    <location>
        <position position="79"/>
    </location>
    <ligand>
        <name>anthranilate</name>
        <dbReference type="ChEBI" id="CHEBI:16567"/>
        <label>1</label>
    </ligand>
</feature>
<feature type="binding site" evidence="1">
    <location>
        <begin position="82"/>
        <end position="83"/>
    </location>
    <ligand>
        <name>5-phospho-alpha-D-ribose 1-diphosphate</name>
        <dbReference type="ChEBI" id="CHEBI:58017"/>
    </ligand>
</feature>
<feature type="binding site" evidence="1">
    <location>
        <position position="87"/>
    </location>
    <ligand>
        <name>5-phospho-alpha-D-ribose 1-diphosphate</name>
        <dbReference type="ChEBI" id="CHEBI:58017"/>
    </ligand>
</feature>
<feature type="binding site" evidence="1">
    <location>
        <begin position="89"/>
        <end position="92"/>
    </location>
    <ligand>
        <name>5-phospho-alpha-D-ribose 1-diphosphate</name>
        <dbReference type="ChEBI" id="CHEBI:58017"/>
    </ligand>
</feature>
<feature type="binding site" evidence="1">
    <location>
        <position position="91"/>
    </location>
    <ligand>
        <name>Mg(2+)</name>
        <dbReference type="ChEBI" id="CHEBI:18420"/>
        <label>1</label>
    </ligand>
</feature>
<feature type="binding site" evidence="1">
    <location>
        <begin position="107"/>
        <end position="115"/>
    </location>
    <ligand>
        <name>5-phospho-alpha-D-ribose 1-diphosphate</name>
        <dbReference type="ChEBI" id="CHEBI:58017"/>
    </ligand>
</feature>
<feature type="binding site" evidence="1">
    <location>
        <position position="110"/>
    </location>
    <ligand>
        <name>anthranilate</name>
        <dbReference type="ChEBI" id="CHEBI:16567"/>
        <label>1</label>
    </ligand>
</feature>
<feature type="binding site" evidence="1">
    <location>
        <position position="119"/>
    </location>
    <ligand>
        <name>5-phospho-alpha-D-ribose 1-diphosphate</name>
        <dbReference type="ChEBI" id="CHEBI:58017"/>
    </ligand>
</feature>
<feature type="binding site" evidence="1">
    <location>
        <position position="165"/>
    </location>
    <ligand>
        <name>anthranilate</name>
        <dbReference type="ChEBI" id="CHEBI:16567"/>
        <label>2</label>
    </ligand>
</feature>
<feature type="binding site" evidence="1">
    <location>
        <position position="224"/>
    </location>
    <ligand>
        <name>Mg(2+)</name>
        <dbReference type="ChEBI" id="CHEBI:18420"/>
        <label>2</label>
    </ligand>
</feature>
<feature type="binding site" evidence="1">
    <location>
        <position position="225"/>
    </location>
    <ligand>
        <name>Mg(2+)</name>
        <dbReference type="ChEBI" id="CHEBI:18420"/>
        <label>1</label>
    </ligand>
</feature>
<feature type="binding site" evidence="1">
    <location>
        <position position="225"/>
    </location>
    <ligand>
        <name>Mg(2+)</name>
        <dbReference type="ChEBI" id="CHEBI:18420"/>
        <label>2</label>
    </ligand>
</feature>